<reference key="1">
    <citation type="journal article" date="2004" name="Proc. Natl. Acad. Sci. U.S.A.">
        <title>Complete genomes of two clinical Staphylococcus aureus strains: evidence for the rapid evolution of virulence and drug resistance.</title>
        <authorList>
            <person name="Holden M.T.G."/>
            <person name="Feil E.J."/>
            <person name="Lindsay J.A."/>
            <person name="Peacock S.J."/>
            <person name="Day N.P.J."/>
            <person name="Enright M.C."/>
            <person name="Foster T.J."/>
            <person name="Moore C.E."/>
            <person name="Hurst L."/>
            <person name="Atkin R."/>
            <person name="Barron A."/>
            <person name="Bason N."/>
            <person name="Bentley S.D."/>
            <person name="Chillingworth C."/>
            <person name="Chillingworth T."/>
            <person name="Churcher C."/>
            <person name="Clark L."/>
            <person name="Corton C."/>
            <person name="Cronin A."/>
            <person name="Doggett J."/>
            <person name="Dowd L."/>
            <person name="Feltwell T."/>
            <person name="Hance Z."/>
            <person name="Harris B."/>
            <person name="Hauser H."/>
            <person name="Holroyd S."/>
            <person name="Jagels K."/>
            <person name="James K.D."/>
            <person name="Lennard N."/>
            <person name="Line A."/>
            <person name="Mayes R."/>
            <person name="Moule S."/>
            <person name="Mungall K."/>
            <person name="Ormond D."/>
            <person name="Quail M.A."/>
            <person name="Rabbinowitsch E."/>
            <person name="Rutherford K.M."/>
            <person name="Sanders M."/>
            <person name="Sharp S."/>
            <person name="Simmonds M."/>
            <person name="Stevens K."/>
            <person name="Whitehead S."/>
            <person name="Barrell B.G."/>
            <person name="Spratt B.G."/>
            <person name="Parkhill J."/>
        </authorList>
    </citation>
    <scope>NUCLEOTIDE SEQUENCE [LARGE SCALE GENOMIC DNA]</scope>
    <source>
        <strain>MSSA476</strain>
    </source>
</reference>
<feature type="chain" id="PRO_0000166531" description="Potassium-transporting ATPase potassium-binding subunit">
    <location>
        <begin position="1"/>
        <end position="558"/>
    </location>
</feature>
<feature type="transmembrane region" description="Helical" evidence="1">
    <location>
        <begin position="1"/>
        <end position="21"/>
    </location>
</feature>
<feature type="transmembrane region" description="Helical" evidence="1">
    <location>
        <begin position="66"/>
        <end position="86"/>
    </location>
</feature>
<feature type="transmembrane region" description="Helical" evidence="1">
    <location>
        <begin position="127"/>
        <end position="147"/>
    </location>
</feature>
<feature type="transmembrane region" description="Helical" evidence="1">
    <location>
        <begin position="166"/>
        <end position="186"/>
    </location>
</feature>
<feature type="transmembrane region" description="Helical" evidence="1">
    <location>
        <begin position="245"/>
        <end position="265"/>
    </location>
</feature>
<feature type="transmembrane region" description="Helical" evidence="1">
    <location>
        <begin position="281"/>
        <end position="301"/>
    </location>
</feature>
<feature type="transmembrane region" description="Helical" evidence="1">
    <location>
        <begin position="327"/>
        <end position="347"/>
    </location>
</feature>
<feature type="transmembrane region" description="Helical" evidence="1">
    <location>
        <begin position="354"/>
        <end position="374"/>
    </location>
</feature>
<feature type="transmembrane region" description="Helical" evidence="1">
    <location>
        <begin position="377"/>
        <end position="397"/>
    </location>
</feature>
<feature type="transmembrane region" description="Helical" evidence="1">
    <location>
        <begin position="416"/>
        <end position="436"/>
    </location>
</feature>
<feature type="transmembrane region" description="Helical" evidence="1">
    <location>
        <begin position="482"/>
        <end position="502"/>
    </location>
</feature>
<feature type="transmembrane region" description="Helical" evidence="1">
    <location>
        <begin position="531"/>
        <end position="551"/>
    </location>
</feature>
<dbReference type="EMBL" id="BX571857">
    <property type="protein sequence ID" value="CAG43789.1"/>
    <property type="molecule type" value="Genomic_DNA"/>
</dbReference>
<dbReference type="RefSeq" id="WP_000402658.1">
    <property type="nucleotide sequence ID" value="NC_002953.3"/>
</dbReference>
<dbReference type="SMR" id="Q6G7N2"/>
<dbReference type="KEGG" id="sas:SAS1982"/>
<dbReference type="HOGENOM" id="CLU_018614_3_0_9"/>
<dbReference type="GO" id="GO:0005886">
    <property type="term" value="C:plasma membrane"/>
    <property type="evidence" value="ECO:0007669"/>
    <property type="project" value="UniProtKB-SubCell"/>
</dbReference>
<dbReference type="GO" id="GO:0008556">
    <property type="term" value="F:P-type potassium transmembrane transporter activity"/>
    <property type="evidence" value="ECO:0007669"/>
    <property type="project" value="InterPro"/>
</dbReference>
<dbReference type="GO" id="GO:0030955">
    <property type="term" value="F:potassium ion binding"/>
    <property type="evidence" value="ECO:0007669"/>
    <property type="project" value="UniProtKB-UniRule"/>
</dbReference>
<dbReference type="HAMAP" id="MF_00275">
    <property type="entry name" value="KdpA"/>
    <property type="match status" value="1"/>
</dbReference>
<dbReference type="InterPro" id="IPR004623">
    <property type="entry name" value="KdpA"/>
</dbReference>
<dbReference type="NCBIfam" id="TIGR00680">
    <property type="entry name" value="kdpA"/>
    <property type="match status" value="1"/>
</dbReference>
<dbReference type="PANTHER" id="PTHR30607">
    <property type="entry name" value="POTASSIUM-TRANSPORTING ATPASE A CHAIN"/>
    <property type="match status" value="1"/>
</dbReference>
<dbReference type="PANTHER" id="PTHR30607:SF2">
    <property type="entry name" value="POTASSIUM-TRANSPORTING ATPASE POTASSIUM-BINDING SUBUNIT"/>
    <property type="match status" value="1"/>
</dbReference>
<dbReference type="Pfam" id="PF03814">
    <property type="entry name" value="KdpA"/>
    <property type="match status" value="1"/>
</dbReference>
<dbReference type="PIRSF" id="PIRSF001294">
    <property type="entry name" value="K_ATPaseA"/>
    <property type="match status" value="1"/>
</dbReference>
<accession>Q6G7N2</accession>
<name>KDPA_STAAS</name>
<gene>
    <name evidence="1" type="primary">kdpA</name>
    <name type="ordered locus">SAS1982</name>
</gene>
<proteinExistence type="inferred from homology"/>
<evidence type="ECO:0000255" key="1">
    <source>
        <dbReference type="HAMAP-Rule" id="MF_00275"/>
    </source>
</evidence>
<sequence length="558" mass="62042">MEIILFLTMMVMITYVFSGYLYRVALVQSSRVDLIFTRFENMCFKIIGTDLEHMSAKTYVKHFLAFNGFMGFITFVLLIVQQWLFLNPNHNLNQSIDLAFNTAISFLTNSNLQHYNGESDVTYLTQMIVMTYLMFTSSASGYAVCIAMLRRLTGLTNIIGNFYQDIVRFIVRVLLPLSCLISILLMTQGVPQTLHANLMIRTLSGHIQHIAFGPIASLESIKHLGTNGGGFLAGNSATPFENPNIWSNFIEMGSMMLLPMSMLFLFGRMLSRHGKRVHRHALILFVAMFFIFIAILTLTMWSEYRGNPILANLGIYGPNMEGKEVRFGAGLSALFTVITTAFTTGSVNNMHDSLTPLGGLGPMVLMMLNVVFGGEGVGLMNLLIYVLLTVFICSLMVGKTPEYLNMPIGAREMKCIVLVFLIHPILILVFSALAFMIPGASESITNPSFHGISQVMYEMTSAAANNGSGFEGLKDDTTFWNISTGIIMLLSRYIPIILQLMIASSLVNKKSYHQDKYTIAIDKPYFGVSLIVFIVLLSGLTFIPVLLLGPIGEFLTLK</sequence>
<keyword id="KW-1003">Cell membrane</keyword>
<keyword id="KW-0406">Ion transport</keyword>
<keyword id="KW-0472">Membrane</keyword>
<keyword id="KW-0630">Potassium</keyword>
<keyword id="KW-0633">Potassium transport</keyword>
<keyword id="KW-0812">Transmembrane</keyword>
<keyword id="KW-1133">Transmembrane helix</keyword>
<keyword id="KW-0813">Transport</keyword>
<protein>
    <recommendedName>
        <fullName evidence="1">Potassium-transporting ATPase potassium-binding subunit</fullName>
    </recommendedName>
    <alternativeName>
        <fullName evidence="1">ATP phosphohydrolase [potassium-transporting] A chain</fullName>
    </alternativeName>
    <alternativeName>
        <fullName evidence="1">Potassium-binding and translocating subunit A</fullName>
    </alternativeName>
    <alternativeName>
        <fullName evidence="1">Potassium-translocating ATPase A chain</fullName>
    </alternativeName>
</protein>
<comment type="function">
    <text evidence="1">Part of the high-affinity ATP-driven potassium transport (or Kdp) system, which catalyzes the hydrolysis of ATP coupled with the electrogenic transport of potassium into the cytoplasm. This subunit binds the extracellular potassium ions and delivers the ions to the membrane domain of KdpB through an intramembrane tunnel.</text>
</comment>
<comment type="subunit">
    <text evidence="1">The system is composed of three essential subunits: KdpA, KdpB and KdpC.</text>
</comment>
<comment type="subcellular location">
    <subcellularLocation>
        <location evidence="1">Cell membrane</location>
        <topology evidence="1">Multi-pass membrane protein</topology>
    </subcellularLocation>
</comment>
<comment type="similarity">
    <text evidence="1">Belongs to the KdpA family.</text>
</comment>
<organism>
    <name type="scientific">Staphylococcus aureus (strain MSSA476)</name>
    <dbReference type="NCBI Taxonomy" id="282459"/>
    <lineage>
        <taxon>Bacteria</taxon>
        <taxon>Bacillati</taxon>
        <taxon>Bacillota</taxon>
        <taxon>Bacilli</taxon>
        <taxon>Bacillales</taxon>
        <taxon>Staphylococcaceae</taxon>
        <taxon>Staphylococcus</taxon>
    </lineage>
</organism>